<accession>O42955</accession>
<keyword id="KW-0496">Mitochondrion</keyword>
<keyword id="KW-0507">mRNA processing</keyword>
<keyword id="KW-0508">mRNA splicing</keyword>
<keyword id="KW-1185">Reference proteome</keyword>
<keyword id="KW-0677">Repeat</keyword>
<keyword id="KW-0809">Transit peptide</keyword>
<gene>
    <name evidence="6" type="primary">ppr3</name>
    <name type="synonym">dmr1</name>
    <name type="ORF">SPBC19G7.07c</name>
</gene>
<dbReference type="EMBL" id="CU329671">
    <property type="protein sequence ID" value="CAA17061.1"/>
    <property type="molecule type" value="Genomic_DNA"/>
</dbReference>
<dbReference type="PIR" id="T39838">
    <property type="entry name" value="T39838"/>
</dbReference>
<dbReference type="RefSeq" id="NP_595973.1">
    <property type="nucleotide sequence ID" value="NM_001021881.2"/>
</dbReference>
<dbReference type="SMR" id="O42955"/>
<dbReference type="BioGRID" id="277247">
    <property type="interactions" value="2"/>
</dbReference>
<dbReference type="FunCoup" id="O42955">
    <property type="interactions" value="200"/>
</dbReference>
<dbReference type="STRING" id="284812.O42955"/>
<dbReference type="PaxDb" id="4896-SPBC19G7.07c.1"/>
<dbReference type="EnsemblFungi" id="SPBC19G7.07c.1">
    <property type="protein sequence ID" value="SPBC19G7.07c.1:pep"/>
    <property type="gene ID" value="SPBC19G7.07c"/>
</dbReference>
<dbReference type="GeneID" id="2540724"/>
<dbReference type="KEGG" id="spo:2540724"/>
<dbReference type="PomBase" id="SPBC19G7.07c">
    <property type="gene designation" value="ppr3"/>
</dbReference>
<dbReference type="VEuPathDB" id="FungiDB:SPBC19G7.07c"/>
<dbReference type="eggNOG" id="ENOG502QUX2">
    <property type="taxonomic scope" value="Eukaryota"/>
</dbReference>
<dbReference type="HOGENOM" id="CLU_025807_0_0_1"/>
<dbReference type="InParanoid" id="O42955"/>
<dbReference type="OMA" id="WHELCYQ"/>
<dbReference type="PhylomeDB" id="O42955"/>
<dbReference type="PRO" id="PR:O42955"/>
<dbReference type="Proteomes" id="UP000002485">
    <property type="component" value="Chromosome II"/>
</dbReference>
<dbReference type="GO" id="GO:0005759">
    <property type="term" value="C:mitochondrial matrix"/>
    <property type="evidence" value="ECO:0000305"/>
    <property type="project" value="PomBase"/>
</dbReference>
<dbReference type="GO" id="GO:0005739">
    <property type="term" value="C:mitochondrion"/>
    <property type="evidence" value="ECO:0000314"/>
    <property type="project" value="PomBase"/>
</dbReference>
<dbReference type="GO" id="GO:0140053">
    <property type="term" value="P:mitochondrial gene expression"/>
    <property type="evidence" value="ECO:0000315"/>
    <property type="project" value="PomBase"/>
</dbReference>
<dbReference type="GO" id="GO:0006397">
    <property type="term" value="P:mRNA processing"/>
    <property type="evidence" value="ECO:0007669"/>
    <property type="project" value="UniProtKB-KW"/>
</dbReference>
<dbReference type="GO" id="GO:0008380">
    <property type="term" value="P:RNA splicing"/>
    <property type="evidence" value="ECO:0007669"/>
    <property type="project" value="UniProtKB-KW"/>
</dbReference>
<dbReference type="Gene3D" id="1.25.40.10">
    <property type="entry name" value="Tetratricopeptide repeat domain"/>
    <property type="match status" value="1"/>
</dbReference>
<dbReference type="InterPro" id="IPR002885">
    <property type="entry name" value="Pentatricopeptide_rpt"/>
</dbReference>
<dbReference type="InterPro" id="IPR011990">
    <property type="entry name" value="TPR-like_helical_dom_sf"/>
</dbReference>
<dbReference type="NCBIfam" id="TIGR00756">
    <property type="entry name" value="PPR"/>
    <property type="match status" value="1"/>
</dbReference>
<dbReference type="PANTHER" id="PTHR47936:SF1">
    <property type="entry name" value="PENTATRICOPEPTIDE REPEAT-CONTAINING PROTEIN GUN1, CHLOROPLASTIC"/>
    <property type="match status" value="1"/>
</dbReference>
<dbReference type="PANTHER" id="PTHR47936">
    <property type="entry name" value="PPR_LONG DOMAIN-CONTAINING PROTEIN"/>
    <property type="match status" value="1"/>
</dbReference>
<dbReference type="Pfam" id="PF01535">
    <property type="entry name" value="PPR"/>
    <property type="match status" value="2"/>
</dbReference>
<dbReference type="PROSITE" id="PS51375">
    <property type="entry name" value="PPR"/>
    <property type="match status" value="4"/>
</dbReference>
<organism>
    <name type="scientific">Schizosaccharomyces pombe (strain 972 / ATCC 24843)</name>
    <name type="common">Fission yeast</name>
    <dbReference type="NCBI Taxonomy" id="284812"/>
    <lineage>
        <taxon>Eukaryota</taxon>
        <taxon>Fungi</taxon>
        <taxon>Dikarya</taxon>
        <taxon>Ascomycota</taxon>
        <taxon>Taphrinomycotina</taxon>
        <taxon>Schizosaccharomycetes</taxon>
        <taxon>Schizosaccharomycetales</taxon>
        <taxon>Schizosaccharomycetaceae</taxon>
        <taxon>Schizosaccharomyces</taxon>
    </lineage>
</organism>
<name>CCM1_SCHPO</name>
<feature type="transit peptide" description="Mitochondrion" evidence="2">
    <location>
        <begin position="1"/>
        <end position="49"/>
    </location>
</feature>
<feature type="chain" id="PRO_0000316605" description="Mitochondrial 15S rRNA processing factor ppr3" evidence="2">
    <location>
        <begin position="50"/>
        <end position="687"/>
    </location>
</feature>
<feature type="repeat" description="PPR 1" evidence="3">
    <location>
        <begin position="262"/>
        <end position="296"/>
    </location>
</feature>
<feature type="repeat" description="PPR 2" evidence="3">
    <location>
        <begin position="297"/>
        <end position="331"/>
    </location>
</feature>
<feature type="repeat" description="PPR 3" evidence="3">
    <location>
        <begin position="334"/>
        <end position="368"/>
    </location>
</feature>
<feature type="repeat" description="PPR 4" evidence="3">
    <location>
        <begin position="372"/>
        <end position="407"/>
    </location>
</feature>
<protein>
    <recommendedName>
        <fullName evidence="7">Mitochondrial 15S rRNA processing factor ppr3</fullName>
    </recommendedName>
    <alternativeName>
        <fullName evidence="6">Pentatricopeptide repeat-containing protein 3</fullName>
    </alternativeName>
</protein>
<sequence length="687" mass="79293">MLNKCSGSLTLLAVRRFCGPCRRLHYHKDNPNNINIAKNLLNNNIQARCSTNEASWKLAQKELDLKIREYEQKLKDVKLNDINKKSPLNIPDEVWTKFISEVNSYDKEKENHLSTGNHELRRTTPLKIGPLLLTRIGLLKSKNTASNNYSVDHIVSNLANDNTLLNRQVSTEEWNSHLRHLLNIPKCFLGVDIVEIVNFFNYLPQTVISKSSLEIWKAVEESGMKVMPDLLVLLMESTNASGDFRKTVQLYHLYQKSNAPPNGLVYQSYAIALSSLGKHKDLVALYSEQKSVSITPSKDFLNACIKAFSRTKEFTKAWEVFNFMKFTATSISPSAETYGLMIQICSSQYNPEKALDLYNEMKLRPIDPLTPTTFVINNLIHALATDVRFQTVAFSLLQDLSHYGLRPNHSTLYELIRLIAYSGKLDYMKDILDNFWVRQKLLPSILKVEQIFHFIFRALISAEVQTSSVTPDYTHFKEEVRKIIDSSKEPLIPFLKRSTLTENDLFLNAIYTFEYAKRKFPEALNSRLVTDFLNIFLERGSVQLFKEIYQLEFREMSTMEGSSMKVAKITLTYIYAIKLALLFNDFEFGYAAWQEYWHCKIHKLLPKEDASYEQKVVLLTLSLLSKNKHTSLARSLLLSHLDKGWTWNKHSLGFMRKMCSVMNDQATVYLIDSITNEIGINQRFTRK</sequence>
<proteinExistence type="inferred from homology"/>
<evidence type="ECO:0000250" key="1">
    <source>
        <dbReference type="UniProtKB" id="P48237"/>
    </source>
</evidence>
<evidence type="ECO:0000255" key="2"/>
<evidence type="ECO:0000255" key="3">
    <source>
        <dbReference type="PROSITE-ProRule" id="PRU00708"/>
    </source>
</evidence>
<evidence type="ECO:0000269" key="4">
    <source>
    </source>
</evidence>
<evidence type="ECO:0000269" key="5">
    <source>
    </source>
</evidence>
<evidence type="ECO:0000303" key="6">
    <source>
    </source>
</evidence>
<evidence type="ECO:0000305" key="7"/>
<comment type="function">
    <text evidence="1 5">Regulates mitochondrial small subunit maturation by controlling 15S rRNA 5'-end processing (PubMed:21727087). Localizes to the 5' precursor of the 15S rRNA in a position that is subsequently occupied by mS47 in the mature yeast mtSSU. Uses structure and sequence-specific RNA recognition, binding to a single-stranded region of the precursor and specifically recognizing bases -6 to -1. The exchange of Ccm1 for mS47 is coupled to the irreversible removal of precursor rRNA that is accompanied by conformational changes of the mitoribosomal proteins uS5m and mS26. These conformational changes signal completion of 5'-end rRNA processing through protection of the mature 5'-end of the 15S rRNA and stabilization of mS47. The removal of the 5' precursor together with the dissociation of Ccm1 may be catalyzed by the 5'-3' exoribonuclease Pet127. Involved in the specific removal of group I introns in mitochondrial encoded transcripts (By similarity).</text>
</comment>
<comment type="subunit">
    <text evidence="1">Binds to mitochondrial small subunit 15S rRNA.</text>
</comment>
<comment type="subcellular location">
    <subcellularLocation>
        <location evidence="4 5">Mitochondrion</location>
    </subcellularLocation>
</comment>
<comment type="disruption phenotype">
    <text evidence="5">Impairs growth on galactose and leads to thermosensitivity on glucose-containing media.</text>
</comment>
<comment type="miscellaneous">
    <text evidence="1">Involved in mitochondrial-nuclear incompatibility, a major determinant in reproductive isolation between species, through hybrid incompatibility of Ccm1 and its interacting partner 15S rRNA between yeast species.</text>
</comment>
<comment type="similarity">
    <text evidence="7">Belongs to the CCM1 family.</text>
</comment>
<reference key="1">
    <citation type="journal article" date="2002" name="Nature">
        <title>The genome sequence of Schizosaccharomyces pombe.</title>
        <authorList>
            <person name="Wood V."/>
            <person name="Gwilliam R."/>
            <person name="Rajandream M.A."/>
            <person name="Lyne M.H."/>
            <person name="Lyne R."/>
            <person name="Stewart A."/>
            <person name="Sgouros J.G."/>
            <person name="Peat N."/>
            <person name="Hayles J."/>
            <person name="Baker S.G."/>
            <person name="Basham D."/>
            <person name="Bowman S."/>
            <person name="Brooks K."/>
            <person name="Brown D."/>
            <person name="Brown S."/>
            <person name="Chillingworth T."/>
            <person name="Churcher C.M."/>
            <person name="Collins M."/>
            <person name="Connor R."/>
            <person name="Cronin A."/>
            <person name="Davis P."/>
            <person name="Feltwell T."/>
            <person name="Fraser A."/>
            <person name="Gentles S."/>
            <person name="Goble A."/>
            <person name="Hamlin N."/>
            <person name="Harris D.E."/>
            <person name="Hidalgo J."/>
            <person name="Hodgson G."/>
            <person name="Holroyd S."/>
            <person name="Hornsby T."/>
            <person name="Howarth S."/>
            <person name="Huckle E.J."/>
            <person name="Hunt S."/>
            <person name="Jagels K."/>
            <person name="James K.D."/>
            <person name="Jones L."/>
            <person name="Jones M."/>
            <person name="Leather S."/>
            <person name="McDonald S."/>
            <person name="McLean J."/>
            <person name="Mooney P."/>
            <person name="Moule S."/>
            <person name="Mungall K.L."/>
            <person name="Murphy L.D."/>
            <person name="Niblett D."/>
            <person name="Odell C."/>
            <person name="Oliver K."/>
            <person name="O'Neil S."/>
            <person name="Pearson D."/>
            <person name="Quail M.A."/>
            <person name="Rabbinowitsch E."/>
            <person name="Rutherford K.M."/>
            <person name="Rutter S."/>
            <person name="Saunders D."/>
            <person name="Seeger K."/>
            <person name="Sharp S."/>
            <person name="Skelton J."/>
            <person name="Simmonds M.N."/>
            <person name="Squares R."/>
            <person name="Squares S."/>
            <person name="Stevens K."/>
            <person name="Taylor K."/>
            <person name="Taylor R.G."/>
            <person name="Tivey A."/>
            <person name="Walsh S.V."/>
            <person name="Warren T."/>
            <person name="Whitehead S."/>
            <person name="Woodward J.R."/>
            <person name="Volckaert G."/>
            <person name="Aert R."/>
            <person name="Robben J."/>
            <person name="Grymonprez B."/>
            <person name="Weltjens I."/>
            <person name="Vanstreels E."/>
            <person name="Rieger M."/>
            <person name="Schaefer M."/>
            <person name="Mueller-Auer S."/>
            <person name="Gabel C."/>
            <person name="Fuchs M."/>
            <person name="Duesterhoeft A."/>
            <person name="Fritzc C."/>
            <person name="Holzer E."/>
            <person name="Moestl D."/>
            <person name="Hilbert H."/>
            <person name="Borzym K."/>
            <person name="Langer I."/>
            <person name="Beck A."/>
            <person name="Lehrach H."/>
            <person name="Reinhardt R."/>
            <person name="Pohl T.M."/>
            <person name="Eger P."/>
            <person name="Zimmermann W."/>
            <person name="Wedler H."/>
            <person name="Wambutt R."/>
            <person name="Purnelle B."/>
            <person name="Goffeau A."/>
            <person name="Cadieu E."/>
            <person name="Dreano S."/>
            <person name="Gloux S."/>
            <person name="Lelaure V."/>
            <person name="Mottier S."/>
            <person name="Galibert F."/>
            <person name="Aves S.J."/>
            <person name="Xiang Z."/>
            <person name="Hunt C."/>
            <person name="Moore K."/>
            <person name="Hurst S.M."/>
            <person name="Lucas M."/>
            <person name="Rochet M."/>
            <person name="Gaillardin C."/>
            <person name="Tallada V.A."/>
            <person name="Garzon A."/>
            <person name="Thode G."/>
            <person name="Daga R.R."/>
            <person name="Cruzado L."/>
            <person name="Jimenez J."/>
            <person name="Sanchez M."/>
            <person name="del Rey F."/>
            <person name="Benito J."/>
            <person name="Dominguez A."/>
            <person name="Revuelta J.L."/>
            <person name="Moreno S."/>
            <person name="Armstrong J."/>
            <person name="Forsburg S.L."/>
            <person name="Cerutti L."/>
            <person name="Lowe T."/>
            <person name="McCombie W.R."/>
            <person name="Paulsen I."/>
            <person name="Potashkin J."/>
            <person name="Shpakovski G.V."/>
            <person name="Ussery D."/>
            <person name="Barrell B.G."/>
            <person name="Nurse P."/>
        </authorList>
    </citation>
    <scope>NUCLEOTIDE SEQUENCE [LARGE SCALE GENOMIC DNA]</scope>
    <source>
        <strain>972 / ATCC 24843</strain>
    </source>
</reference>
<reference key="2">
    <citation type="journal article" date="2006" name="Nat. Biotechnol.">
        <title>ORFeome cloning and global analysis of protein localization in the fission yeast Schizosaccharomyces pombe.</title>
        <authorList>
            <person name="Matsuyama A."/>
            <person name="Arai R."/>
            <person name="Yashiroda Y."/>
            <person name="Shirai A."/>
            <person name="Kamata A."/>
            <person name="Sekido S."/>
            <person name="Kobayashi Y."/>
            <person name="Hashimoto A."/>
            <person name="Hamamoto M."/>
            <person name="Hiraoka Y."/>
            <person name="Horinouchi S."/>
            <person name="Yoshida M."/>
        </authorList>
    </citation>
    <scope>SUBCELLULAR LOCATION [LARGE SCALE ANALYSIS]</scope>
</reference>
<reference key="3">
    <citation type="journal article" date="2011" name="Nucleic Acids Res.">
        <title>A genome wide study in fission yeast reveals nine PPR proteins that regulate mitochondrial gene expression.</title>
        <authorList>
            <person name="Kuhl I."/>
            <person name="Dujeancourt L."/>
            <person name="Gaisne M."/>
            <person name="Herbert C.J."/>
            <person name="Bonnefoy N."/>
        </authorList>
    </citation>
    <scope>DOMAIN</scope>
    <scope>SUBCELLULAR LOCATION</scope>
    <scope>DISRUPTION PHENOTYPE</scope>
    <scope>FUNCTION</scope>
</reference>